<feature type="chain" id="PRO_0000287006" description="Cyclin-B1-4">
    <location>
        <begin position="1"/>
        <end position="387"/>
    </location>
</feature>
<feature type="region of interest" description="Disordered" evidence="1">
    <location>
        <begin position="1"/>
        <end position="29"/>
    </location>
</feature>
<protein>
    <recommendedName>
        <fullName>Cyclin-B1-4</fullName>
    </recommendedName>
    <alternativeName>
        <fullName>G2/mitotic-specific cyclin-B1-4</fullName>
        <shortName>CycB1;4</shortName>
    </alternativeName>
</protein>
<reference key="1">
    <citation type="journal article" date="1999" name="Nature">
        <title>Sequence and analysis of chromosome 2 of the plant Arabidopsis thaliana.</title>
        <authorList>
            <person name="Lin X."/>
            <person name="Kaul S."/>
            <person name="Rounsley S.D."/>
            <person name="Shea T.P."/>
            <person name="Benito M.-I."/>
            <person name="Town C.D."/>
            <person name="Fujii C.Y."/>
            <person name="Mason T.M."/>
            <person name="Bowman C.L."/>
            <person name="Barnstead M.E."/>
            <person name="Feldblyum T.V."/>
            <person name="Buell C.R."/>
            <person name="Ketchum K.A."/>
            <person name="Lee J.J."/>
            <person name="Ronning C.M."/>
            <person name="Koo H.L."/>
            <person name="Moffat K.S."/>
            <person name="Cronin L.A."/>
            <person name="Shen M."/>
            <person name="Pai G."/>
            <person name="Van Aken S."/>
            <person name="Umayam L."/>
            <person name="Tallon L.J."/>
            <person name="Gill J.E."/>
            <person name="Adams M.D."/>
            <person name="Carrera A.J."/>
            <person name="Creasy T.H."/>
            <person name="Goodman H.M."/>
            <person name="Somerville C.R."/>
            <person name="Copenhaver G.P."/>
            <person name="Preuss D."/>
            <person name="Nierman W.C."/>
            <person name="White O."/>
            <person name="Eisen J.A."/>
            <person name="Salzberg S.L."/>
            <person name="Fraser C.M."/>
            <person name="Venter J.C."/>
        </authorList>
    </citation>
    <scope>NUCLEOTIDE SEQUENCE [LARGE SCALE GENOMIC DNA]</scope>
    <source>
        <strain>cv. Columbia</strain>
    </source>
</reference>
<reference key="2">
    <citation type="journal article" date="2017" name="Plant J.">
        <title>Araport11: a complete reannotation of the Arabidopsis thaliana reference genome.</title>
        <authorList>
            <person name="Cheng C.Y."/>
            <person name="Krishnakumar V."/>
            <person name="Chan A.P."/>
            <person name="Thibaud-Nissen F."/>
            <person name="Schobel S."/>
            <person name="Town C.D."/>
        </authorList>
    </citation>
    <scope>GENOME REANNOTATION</scope>
    <source>
        <strain>cv. Columbia</strain>
    </source>
</reference>
<reference key="3">
    <citation type="journal article" date="2003" name="Science">
        <title>Empirical analysis of transcriptional activity in the Arabidopsis genome.</title>
        <authorList>
            <person name="Yamada K."/>
            <person name="Lim J."/>
            <person name="Dale J.M."/>
            <person name="Chen H."/>
            <person name="Shinn P."/>
            <person name="Palm C.J."/>
            <person name="Southwick A.M."/>
            <person name="Wu H.C."/>
            <person name="Kim C.J."/>
            <person name="Nguyen M."/>
            <person name="Pham P.K."/>
            <person name="Cheuk R.F."/>
            <person name="Karlin-Newmann G."/>
            <person name="Liu S.X."/>
            <person name="Lam B."/>
            <person name="Sakano H."/>
            <person name="Wu T."/>
            <person name="Yu G."/>
            <person name="Miranda M."/>
            <person name="Quach H.L."/>
            <person name="Tripp M."/>
            <person name="Chang C.H."/>
            <person name="Lee J.M."/>
            <person name="Toriumi M.J."/>
            <person name="Chan M.M."/>
            <person name="Tang C.C."/>
            <person name="Onodera C.S."/>
            <person name="Deng J.M."/>
            <person name="Akiyama K."/>
            <person name="Ansari Y."/>
            <person name="Arakawa T."/>
            <person name="Banh J."/>
            <person name="Banno F."/>
            <person name="Bowser L."/>
            <person name="Brooks S.Y."/>
            <person name="Carninci P."/>
            <person name="Chao Q."/>
            <person name="Choy N."/>
            <person name="Enju A."/>
            <person name="Goldsmith A.D."/>
            <person name="Gurjal M."/>
            <person name="Hansen N.F."/>
            <person name="Hayashizaki Y."/>
            <person name="Johnson-Hopson C."/>
            <person name="Hsuan V.W."/>
            <person name="Iida K."/>
            <person name="Karnes M."/>
            <person name="Khan S."/>
            <person name="Koesema E."/>
            <person name="Ishida J."/>
            <person name="Jiang P.X."/>
            <person name="Jones T."/>
            <person name="Kawai J."/>
            <person name="Kamiya A."/>
            <person name="Meyers C."/>
            <person name="Nakajima M."/>
            <person name="Narusaka M."/>
            <person name="Seki M."/>
            <person name="Sakurai T."/>
            <person name="Satou M."/>
            <person name="Tamse R."/>
            <person name="Vaysberg M."/>
            <person name="Wallender E.K."/>
            <person name="Wong C."/>
            <person name="Yamamura Y."/>
            <person name="Yuan S."/>
            <person name="Shinozaki K."/>
            <person name="Davis R.W."/>
            <person name="Theologis A."/>
            <person name="Ecker J.R."/>
        </authorList>
    </citation>
    <scope>NUCLEOTIDE SEQUENCE [LARGE SCALE MRNA]</scope>
    <source>
        <strain>cv. Columbia</strain>
    </source>
</reference>
<reference key="4">
    <citation type="journal article" date="2004" name="Plant Physiol.">
        <title>Genome-wide analysis of the cyclin family in Arabidopsis and comparative phylogenetic analysis of plant cyclin-like proteins.</title>
        <authorList>
            <person name="Wang G."/>
            <person name="Kong H."/>
            <person name="Sun Y."/>
            <person name="Zhang X."/>
            <person name="Zhang W."/>
            <person name="Altman N."/>
            <person name="dePamphilis C.W."/>
            <person name="Ma H."/>
        </authorList>
    </citation>
    <scope>GENE FAMILY</scope>
    <scope>NOMENCLATURE</scope>
</reference>
<comment type="similarity">
    <text evidence="2">Belongs to the cyclin family. Cyclin AB subfamily.</text>
</comment>
<evidence type="ECO:0000256" key="1">
    <source>
        <dbReference type="SAM" id="MobiDB-lite"/>
    </source>
</evidence>
<evidence type="ECO:0000305" key="2"/>
<proteinExistence type="evidence at transcript level"/>
<keyword id="KW-0131">Cell cycle</keyword>
<keyword id="KW-0132">Cell division</keyword>
<keyword id="KW-0195">Cyclin</keyword>
<keyword id="KW-1185">Reference proteome</keyword>
<accession>O48790</accession>
<dbReference type="EMBL" id="AC003105">
    <property type="protein sequence ID" value="AAB95310.1"/>
    <property type="molecule type" value="Genomic_DNA"/>
</dbReference>
<dbReference type="EMBL" id="CP002685">
    <property type="protein sequence ID" value="AEC07883.1"/>
    <property type="molecule type" value="Genomic_DNA"/>
</dbReference>
<dbReference type="EMBL" id="AY050781">
    <property type="protein sequence ID" value="AAK92716.1"/>
    <property type="molecule type" value="mRNA"/>
</dbReference>
<dbReference type="EMBL" id="BT015043">
    <property type="protein sequence ID" value="AAT70494.1"/>
    <property type="molecule type" value="mRNA"/>
</dbReference>
<dbReference type="PIR" id="E84664">
    <property type="entry name" value="E84664"/>
</dbReference>
<dbReference type="RefSeq" id="NP_180244.1">
    <property type="nucleotide sequence ID" value="NM_128233.3"/>
</dbReference>
<dbReference type="SMR" id="O48790"/>
<dbReference type="BioGRID" id="2569">
    <property type="interactions" value="2"/>
</dbReference>
<dbReference type="FunCoup" id="O48790">
    <property type="interactions" value="1168"/>
</dbReference>
<dbReference type="IntAct" id="O48790">
    <property type="interactions" value="1"/>
</dbReference>
<dbReference type="STRING" id="3702.O48790"/>
<dbReference type="iPTMnet" id="O48790"/>
<dbReference type="PaxDb" id="3702-AT2G26760.1"/>
<dbReference type="ProteomicsDB" id="223891"/>
<dbReference type="DNASU" id="817217"/>
<dbReference type="EnsemblPlants" id="AT2G26760.1">
    <property type="protein sequence ID" value="AT2G26760.1"/>
    <property type="gene ID" value="AT2G26760"/>
</dbReference>
<dbReference type="GeneID" id="817217"/>
<dbReference type="Gramene" id="AT2G26760.1">
    <property type="protein sequence ID" value="AT2G26760.1"/>
    <property type="gene ID" value="AT2G26760"/>
</dbReference>
<dbReference type="KEGG" id="ath:AT2G26760"/>
<dbReference type="Araport" id="AT2G26760"/>
<dbReference type="TAIR" id="AT2G26760">
    <property type="gene designation" value="CYCB1"/>
</dbReference>
<dbReference type="eggNOG" id="KOG0653">
    <property type="taxonomic scope" value="Eukaryota"/>
</dbReference>
<dbReference type="HOGENOM" id="CLU_020695_0_3_1"/>
<dbReference type="InParanoid" id="O48790"/>
<dbReference type="OMA" id="IMEHAKM"/>
<dbReference type="PhylomeDB" id="O48790"/>
<dbReference type="PRO" id="PR:O48790"/>
<dbReference type="Proteomes" id="UP000006548">
    <property type="component" value="Chromosome 2"/>
</dbReference>
<dbReference type="ExpressionAtlas" id="O48790">
    <property type="expression patterns" value="baseline and differential"/>
</dbReference>
<dbReference type="GO" id="GO:0016538">
    <property type="term" value="F:cyclin-dependent protein serine/threonine kinase regulator activity"/>
    <property type="evidence" value="ECO:0007669"/>
    <property type="project" value="InterPro"/>
</dbReference>
<dbReference type="GO" id="GO:0051301">
    <property type="term" value="P:cell division"/>
    <property type="evidence" value="ECO:0007669"/>
    <property type="project" value="UniProtKB-KW"/>
</dbReference>
<dbReference type="GO" id="GO:0044772">
    <property type="term" value="P:mitotic cell cycle phase transition"/>
    <property type="evidence" value="ECO:0007669"/>
    <property type="project" value="InterPro"/>
</dbReference>
<dbReference type="CDD" id="cd20567">
    <property type="entry name" value="CYCLIN_AtCycB-like_rpt1"/>
    <property type="match status" value="1"/>
</dbReference>
<dbReference type="CDD" id="cd20511">
    <property type="entry name" value="CYCLIN_AtCycB-like_rpt2"/>
    <property type="match status" value="1"/>
</dbReference>
<dbReference type="FunFam" id="1.10.472.10:FF:000032">
    <property type="entry name" value="G2/mitotic-specific cyclin-1"/>
    <property type="match status" value="1"/>
</dbReference>
<dbReference type="Gene3D" id="1.10.472.10">
    <property type="entry name" value="Cyclin-like"/>
    <property type="match status" value="2"/>
</dbReference>
<dbReference type="InterPro" id="IPR039361">
    <property type="entry name" value="Cyclin"/>
</dbReference>
<dbReference type="InterPro" id="IPR013763">
    <property type="entry name" value="Cyclin-like_dom"/>
</dbReference>
<dbReference type="InterPro" id="IPR036915">
    <property type="entry name" value="Cyclin-like_sf"/>
</dbReference>
<dbReference type="InterPro" id="IPR046965">
    <property type="entry name" value="Cyclin_A/B-like"/>
</dbReference>
<dbReference type="InterPro" id="IPR004367">
    <property type="entry name" value="Cyclin_C-dom"/>
</dbReference>
<dbReference type="InterPro" id="IPR006671">
    <property type="entry name" value="Cyclin_N"/>
</dbReference>
<dbReference type="InterPro" id="IPR048258">
    <property type="entry name" value="Cyclins_cyclin-box"/>
</dbReference>
<dbReference type="PANTHER" id="PTHR10177">
    <property type="entry name" value="CYCLINS"/>
    <property type="match status" value="1"/>
</dbReference>
<dbReference type="Pfam" id="PF02984">
    <property type="entry name" value="Cyclin_C"/>
    <property type="match status" value="1"/>
</dbReference>
<dbReference type="Pfam" id="PF00134">
    <property type="entry name" value="Cyclin_N"/>
    <property type="match status" value="1"/>
</dbReference>
<dbReference type="PIRSF" id="PIRSF001771">
    <property type="entry name" value="Cyclin_A_B_D_E"/>
    <property type="match status" value="1"/>
</dbReference>
<dbReference type="SMART" id="SM00385">
    <property type="entry name" value="CYCLIN"/>
    <property type="match status" value="2"/>
</dbReference>
<dbReference type="SMART" id="SM01332">
    <property type="entry name" value="Cyclin_C"/>
    <property type="match status" value="1"/>
</dbReference>
<dbReference type="SUPFAM" id="SSF47954">
    <property type="entry name" value="Cyclin-like"/>
    <property type="match status" value="2"/>
</dbReference>
<dbReference type="PROSITE" id="PS00292">
    <property type="entry name" value="CYCLINS"/>
    <property type="match status" value="1"/>
</dbReference>
<sequence>MASSRVSDLPHQRGIAGEIKPKNVAGHGRQNRKVLGDIGNLVTGRDVATGKDVAKKAKQPQQQTKAEVIVISPDENEKCKPHFSRRTHIRGTKTFTATLRARSKAASGLKDAVIDIDAVDANNELAAVEYVEDIFKFYRTVEEEGGIKDYIGSQPEINEKMRSILIDWLVDVHRKFELMPETLYLTINLVDRFLSLTMVHRRELQLLGLGAMLIACKYEEIWAPEVNDFVCISDNAYNRKQVLAMEKSILGQVEWYITVPTPYVFLARYVKAAVPCDAEMEKLVFYLAELGLMQYPIVVLNRPSMLAASAVYAARQILKKTPFWTETLKHHTGYSEDEIMEHAKMLMKLRDSASESKLIAVFKKYSVSENAEVALLPSLDDFSVSCA</sequence>
<name>CCB14_ARATH</name>
<gene>
    <name type="primary">CYCB1-4</name>
    <name type="ordered locus">At2g26760</name>
    <name type="ORF">F18A8.13</name>
</gene>
<organism>
    <name type="scientific">Arabidopsis thaliana</name>
    <name type="common">Mouse-ear cress</name>
    <dbReference type="NCBI Taxonomy" id="3702"/>
    <lineage>
        <taxon>Eukaryota</taxon>
        <taxon>Viridiplantae</taxon>
        <taxon>Streptophyta</taxon>
        <taxon>Embryophyta</taxon>
        <taxon>Tracheophyta</taxon>
        <taxon>Spermatophyta</taxon>
        <taxon>Magnoliopsida</taxon>
        <taxon>eudicotyledons</taxon>
        <taxon>Gunneridae</taxon>
        <taxon>Pentapetalae</taxon>
        <taxon>rosids</taxon>
        <taxon>malvids</taxon>
        <taxon>Brassicales</taxon>
        <taxon>Brassicaceae</taxon>
        <taxon>Camelineae</taxon>
        <taxon>Arabidopsis</taxon>
    </lineage>
</organism>